<organism>
    <name type="scientific">Rhizobium meliloti (strain 1021)</name>
    <name type="common">Ensifer meliloti</name>
    <name type="synonym">Sinorhizobium meliloti</name>
    <dbReference type="NCBI Taxonomy" id="266834"/>
    <lineage>
        <taxon>Bacteria</taxon>
        <taxon>Pseudomonadati</taxon>
        <taxon>Pseudomonadota</taxon>
        <taxon>Alphaproteobacteria</taxon>
        <taxon>Hyphomicrobiales</taxon>
        <taxon>Rhizobiaceae</taxon>
        <taxon>Sinorhizobium/Ensifer group</taxon>
        <taxon>Sinorhizobium</taxon>
    </lineage>
</organism>
<geneLocation type="plasmid">
    <name>pSymB</name>
    <name>megaplasmid 2</name>
</geneLocation>
<name>Y5208_RHIME</name>
<dbReference type="EMBL" id="AL591985">
    <property type="protein sequence ID" value="CAC48908.1"/>
    <property type="molecule type" value="Genomic_DNA"/>
</dbReference>
<dbReference type="PIR" id="D95905">
    <property type="entry name" value="D95905"/>
</dbReference>
<dbReference type="RefSeq" id="NP_437048.1">
    <property type="nucleotide sequence ID" value="NC_003078.1"/>
</dbReference>
<dbReference type="RefSeq" id="WP_010975388.1">
    <property type="nucleotide sequence ID" value="NC_003078.1"/>
</dbReference>
<dbReference type="SMR" id="Q92W37"/>
<dbReference type="EnsemblBacteria" id="CAC48908">
    <property type="protein sequence ID" value="CAC48908"/>
    <property type="gene ID" value="SM_b20529"/>
</dbReference>
<dbReference type="KEGG" id="sme:SM_b20529"/>
<dbReference type="PATRIC" id="fig|266834.11.peg.5443"/>
<dbReference type="eggNOG" id="COG3220">
    <property type="taxonomic scope" value="Bacteria"/>
</dbReference>
<dbReference type="HOGENOM" id="CLU_064263_0_0_5"/>
<dbReference type="OrthoDB" id="9763101at2"/>
<dbReference type="Proteomes" id="UP000001976">
    <property type="component" value="Plasmid pSymB"/>
</dbReference>
<dbReference type="Gene3D" id="3.20.20.150">
    <property type="entry name" value="Divalent-metal-dependent TIM barrel enzymes"/>
    <property type="match status" value="1"/>
</dbReference>
<dbReference type="HAMAP" id="MF_00697">
    <property type="entry name" value="UPF0276"/>
    <property type="match status" value="1"/>
</dbReference>
<dbReference type="InterPro" id="IPR007801">
    <property type="entry name" value="MbnB/TglH/ChrH"/>
</dbReference>
<dbReference type="InterPro" id="IPR036237">
    <property type="entry name" value="Xyl_isomerase-like_sf"/>
</dbReference>
<dbReference type="NCBIfam" id="NF003818">
    <property type="entry name" value="PRK05409.1"/>
    <property type="match status" value="1"/>
</dbReference>
<dbReference type="PANTHER" id="PTHR42194">
    <property type="entry name" value="UPF0276 PROTEIN HI_1600"/>
    <property type="match status" value="1"/>
</dbReference>
<dbReference type="PANTHER" id="PTHR42194:SF1">
    <property type="entry name" value="UPF0276 PROTEIN HI_1600"/>
    <property type="match status" value="1"/>
</dbReference>
<dbReference type="Pfam" id="PF05114">
    <property type="entry name" value="MbnB_TglH_ChrH"/>
    <property type="match status" value="1"/>
</dbReference>
<dbReference type="SUPFAM" id="SSF51658">
    <property type="entry name" value="Xylose isomerase-like"/>
    <property type="match status" value="1"/>
</dbReference>
<comment type="similarity">
    <text evidence="1">Belongs to the UPF0276 family.</text>
</comment>
<keyword id="KW-0614">Plasmid</keyword>
<keyword id="KW-1185">Reference proteome</keyword>
<gene>
    <name type="ordered locus">RB0508</name>
    <name type="ORF">SMb20529</name>
</gene>
<proteinExistence type="inferred from homology"/>
<sequence length="309" mass="34071">MTELTIHADRAQLGIPLFPAHPVDGLAGTSFKHQHLPAILADDEWTGGFFEVHAENYMGAGGPPHAALTKIREDYPVSLHGVCMSIGGPQSLDKGHLARFAALVKRYEPALVSEHLAWSTHDTTYYNDLLPLPYTEASLQRVAEHINEVQEVIGRPLLLENPSSYLLFKESTMSETAFIRGLVRRTGCGLLLDINNVFVSATNHGFSALDYLSDFPMAHVGEIHLAGHTEQQDDEGDLLLIDSHDKPVADAVWKLFDVVIALCGPIPTLVEWDSAIPDWPILKREAQAAQMLMDRHAAGLRQETLHVRG</sequence>
<accession>Q92W37</accession>
<evidence type="ECO:0000255" key="1">
    <source>
        <dbReference type="HAMAP-Rule" id="MF_00697"/>
    </source>
</evidence>
<protein>
    <recommendedName>
        <fullName evidence="1">UPF0276 protein RB0508</fullName>
    </recommendedName>
</protein>
<feature type="chain" id="PRO_0000192706" description="UPF0276 protein RB0508">
    <location>
        <begin position="1"/>
        <end position="309"/>
    </location>
</feature>
<reference key="1">
    <citation type="journal article" date="2001" name="Proc. Natl. Acad. Sci. U.S.A.">
        <title>The complete sequence of the 1,683-kb pSymB megaplasmid from the N2-fixing endosymbiont Sinorhizobium meliloti.</title>
        <authorList>
            <person name="Finan T.M."/>
            <person name="Weidner S."/>
            <person name="Wong K."/>
            <person name="Buhrmester J."/>
            <person name="Chain P."/>
            <person name="Vorhoelter F.J."/>
            <person name="Hernandez-Lucas I."/>
            <person name="Becker A."/>
            <person name="Cowie A."/>
            <person name="Gouzy J."/>
            <person name="Golding B."/>
            <person name="Puehler A."/>
        </authorList>
    </citation>
    <scope>NUCLEOTIDE SEQUENCE [LARGE SCALE GENOMIC DNA]</scope>
    <source>
        <strain>1021</strain>
    </source>
</reference>
<reference key="2">
    <citation type="journal article" date="2001" name="Science">
        <title>The composite genome of the legume symbiont Sinorhizobium meliloti.</title>
        <authorList>
            <person name="Galibert F."/>
            <person name="Finan T.M."/>
            <person name="Long S.R."/>
            <person name="Puehler A."/>
            <person name="Abola P."/>
            <person name="Ampe F."/>
            <person name="Barloy-Hubler F."/>
            <person name="Barnett M.J."/>
            <person name="Becker A."/>
            <person name="Boistard P."/>
            <person name="Bothe G."/>
            <person name="Boutry M."/>
            <person name="Bowser L."/>
            <person name="Buhrmester J."/>
            <person name="Cadieu E."/>
            <person name="Capela D."/>
            <person name="Chain P."/>
            <person name="Cowie A."/>
            <person name="Davis R.W."/>
            <person name="Dreano S."/>
            <person name="Federspiel N.A."/>
            <person name="Fisher R.F."/>
            <person name="Gloux S."/>
            <person name="Godrie T."/>
            <person name="Goffeau A."/>
            <person name="Golding B."/>
            <person name="Gouzy J."/>
            <person name="Gurjal M."/>
            <person name="Hernandez-Lucas I."/>
            <person name="Hong A."/>
            <person name="Huizar L."/>
            <person name="Hyman R.W."/>
            <person name="Jones T."/>
            <person name="Kahn D."/>
            <person name="Kahn M.L."/>
            <person name="Kalman S."/>
            <person name="Keating D.H."/>
            <person name="Kiss E."/>
            <person name="Komp C."/>
            <person name="Lelaure V."/>
            <person name="Masuy D."/>
            <person name="Palm C."/>
            <person name="Peck M.C."/>
            <person name="Pohl T.M."/>
            <person name="Portetelle D."/>
            <person name="Purnelle B."/>
            <person name="Ramsperger U."/>
            <person name="Surzycki R."/>
            <person name="Thebault P."/>
            <person name="Vandenbol M."/>
            <person name="Vorhoelter F.J."/>
            <person name="Weidner S."/>
            <person name="Wells D.H."/>
            <person name="Wong K."/>
            <person name="Yeh K.-C."/>
            <person name="Batut J."/>
        </authorList>
    </citation>
    <scope>NUCLEOTIDE SEQUENCE [LARGE SCALE GENOMIC DNA]</scope>
    <source>
        <strain>1021</strain>
    </source>
</reference>